<gene>
    <name evidence="1" type="primary">ssuB</name>
    <name type="ordered locus">RSc1341</name>
</gene>
<evidence type="ECO:0000255" key="1">
    <source>
        <dbReference type="HAMAP-Rule" id="MF_01724"/>
    </source>
</evidence>
<reference key="1">
    <citation type="journal article" date="2002" name="Nature">
        <title>Genome sequence of the plant pathogen Ralstonia solanacearum.</title>
        <authorList>
            <person name="Salanoubat M."/>
            <person name="Genin S."/>
            <person name="Artiguenave F."/>
            <person name="Gouzy J."/>
            <person name="Mangenot S."/>
            <person name="Arlat M."/>
            <person name="Billault A."/>
            <person name="Brottier P."/>
            <person name="Camus J.-C."/>
            <person name="Cattolico L."/>
            <person name="Chandler M."/>
            <person name="Choisne N."/>
            <person name="Claudel-Renard C."/>
            <person name="Cunnac S."/>
            <person name="Demange N."/>
            <person name="Gaspin C."/>
            <person name="Lavie M."/>
            <person name="Moisan A."/>
            <person name="Robert C."/>
            <person name="Saurin W."/>
            <person name="Schiex T."/>
            <person name="Siguier P."/>
            <person name="Thebault P."/>
            <person name="Whalen M."/>
            <person name="Wincker P."/>
            <person name="Levy M."/>
            <person name="Weissenbach J."/>
            <person name="Boucher C.A."/>
        </authorList>
    </citation>
    <scope>NUCLEOTIDE SEQUENCE [LARGE SCALE GENOMIC DNA]</scope>
    <source>
        <strain>ATCC BAA-1114 / GMI1000</strain>
    </source>
</reference>
<name>SSUB_RALN1</name>
<accession>Q8XZQ4</accession>
<protein>
    <recommendedName>
        <fullName evidence="1">Aliphatic sulfonates import ATP-binding protein SsuB</fullName>
        <ecNumber evidence="1">7.6.2.14</ecNumber>
    </recommendedName>
</protein>
<proteinExistence type="inferred from homology"/>
<dbReference type="EC" id="7.6.2.14" evidence="1"/>
<dbReference type="EMBL" id="AL646052">
    <property type="protein sequence ID" value="CAD15043.1"/>
    <property type="molecule type" value="Genomic_DNA"/>
</dbReference>
<dbReference type="RefSeq" id="WP_011001290.1">
    <property type="nucleotide sequence ID" value="NC_003295.1"/>
</dbReference>
<dbReference type="SMR" id="Q8XZQ4"/>
<dbReference type="STRING" id="267608.RSc1341"/>
<dbReference type="EnsemblBacteria" id="CAD15043">
    <property type="protein sequence ID" value="CAD15043"/>
    <property type="gene ID" value="RSc1341"/>
</dbReference>
<dbReference type="KEGG" id="rso:RSc1341"/>
<dbReference type="PATRIC" id="fig|267608.8.peg.1366"/>
<dbReference type="eggNOG" id="COG1116">
    <property type="taxonomic scope" value="Bacteria"/>
</dbReference>
<dbReference type="HOGENOM" id="CLU_000604_1_22_4"/>
<dbReference type="Proteomes" id="UP000001436">
    <property type="component" value="Chromosome"/>
</dbReference>
<dbReference type="GO" id="GO:0005886">
    <property type="term" value="C:plasma membrane"/>
    <property type="evidence" value="ECO:0007669"/>
    <property type="project" value="UniProtKB-SubCell"/>
</dbReference>
<dbReference type="GO" id="GO:0005524">
    <property type="term" value="F:ATP binding"/>
    <property type="evidence" value="ECO:0007669"/>
    <property type="project" value="UniProtKB-KW"/>
</dbReference>
<dbReference type="GO" id="GO:0016887">
    <property type="term" value="F:ATP hydrolysis activity"/>
    <property type="evidence" value="ECO:0007669"/>
    <property type="project" value="InterPro"/>
</dbReference>
<dbReference type="CDD" id="cd03293">
    <property type="entry name" value="ABC_NrtD_SsuB_transporters"/>
    <property type="match status" value="1"/>
</dbReference>
<dbReference type="Gene3D" id="3.40.50.300">
    <property type="entry name" value="P-loop containing nucleotide triphosphate hydrolases"/>
    <property type="match status" value="1"/>
</dbReference>
<dbReference type="InterPro" id="IPR003593">
    <property type="entry name" value="AAA+_ATPase"/>
</dbReference>
<dbReference type="InterPro" id="IPR003439">
    <property type="entry name" value="ABC_transporter-like_ATP-bd"/>
</dbReference>
<dbReference type="InterPro" id="IPR017871">
    <property type="entry name" value="ABC_transporter-like_CS"/>
</dbReference>
<dbReference type="InterPro" id="IPR050166">
    <property type="entry name" value="ABC_transporter_ATP-bind"/>
</dbReference>
<dbReference type="InterPro" id="IPR027417">
    <property type="entry name" value="P-loop_NTPase"/>
</dbReference>
<dbReference type="PANTHER" id="PTHR42788:SF17">
    <property type="entry name" value="ALIPHATIC SULFONATES IMPORT ATP-BINDING PROTEIN SSUB"/>
    <property type="match status" value="1"/>
</dbReference>
<dbReference type="PANTHER" id="PTHR42788">
    <property type="entry name" value="TAURINE IMPORT ATP-BINDING PROTEIN-RELATED"/>
    <property type="match status" value="1"/>
</dbReference>
<dbReference type="Pfam" id="PF00005">
    <property type="entry name" value="ABC_tran"/>
    <property type="match status" value="1"/>
</dbReference>
<dbReference type="SMART" id="SM00382">
    <property type="entry name" value="AAA"/>
    <property type="match status" value="1"/>
</dbReference>
<dbReference type="SUPFAM" id="SSF52540">
    <property type="entry name" value="P-loop containing nucleoside triphosphate hydrolases"/>
    <property type="match status" value="1"/>
</dbReference>
<dbReference type="PROSITE" id="PS00211">
    <property type="entry name" value="ABC_TRANSPORTER_1"/>
    <property type="match status" value="1"/>
</dbReference>
<dbReference type="PROSITE" id="PS50893">
    <property type="entry name" value="ABC_TRANSPORTER_2"/>
    <property type="match status" value="1"/>
</dbReference>
<dbReference type="PROSITE" id="PS51291">
    <property type="entry name" value="SSUB"/>
    <property type="match status" value="1"/>
</dbReference>
<keyword id="KW-0067">ATP-binding</keyword>
<keyword id="KW-0997">Cell inner membrane</keyword>
<keyword id="KW-1003">Cell membrane</keyword>
<keyword id="KW-0472">Membrane</keyword>
<keyword id="KW-0547">Nucleotide-binding</keyword>
<keyword id="KW-1185">Reference proteome</keyword>
<keyword id="KW-1278">Translocase</keyword>
<keyword id="KW-0813">Transport</keyword>
<comment type="function">
    <text evidence="1">Part of the ABC transporter complex SsuABC involved in aliphatic sulfonates import. Responsible for energy coupling to the transport system.</text>
</comment>
<comment type="catalytic activity">
    <reaction evidence="1">
        <text>ATP + H2O + aliphatic sulfonate-[sulfonate-binding protein]Side 1 = ADP + phosphate + aliphatic sulfonateSide 2 + [sulfonate-binding protein]Side 1.</text>
        <dbReference type="EC" id="7.6.2.14"/>
    </reaction>
</comment>
<comment type="subunit">
    <text evidence="1">The complex is composed of two ATP-binding proteins (SsuB), two transmembrane proteins (SsuC) and a solute-binding protein (SsuA).</text>
</comment>
<comment type="subcellular location">
    <subcellularLocation>
        <location evidence="1">Cell inner membrane</location>
        <topology evidence="1">Peripheral membrane protein</topology>
    </subcellularLocation>
</comment>
<comment type="similarity">
    <text evidence="1">Belongs to the ABC transporter superfamily. Aliphatic sulfonates importer (TC 3.A.1.17.2) family.</text>
</comment>
<feature type="chain" id="PRO_0000279949" description="Aliphatic sulfonates import ATP-binding protein SsuB">
    <location>
        <begin position="1"/>
        <end position="284"/>
    </location>
</feature>
<feature type="domain" description="ABC transporter" evidence="1">
    <location>
        <begin position="21"/>
        <end position="242"/>
    </location>
</feature>
<feature type="binding site" evidence="1">
    <location>
        <begin position="53"/>
        <end position="60"/>
    </location>
    <ligand>
        <name>ATP</name>
        <dbReference type="ChEBI" id="CHEBI:30616"/>
    </ligand>
</feature>
<sequence>MQSNATEHAALERVAPRGTALRIAHAVKRYGEREVLYGIDLEIAPGEFVAIVGRSGCGKSTLLRLIAGLEGIDGGSLHRDGAAGGGLHDDARVMFQDARLLPWKRVLDNVALGLPRTHRAQAAEVLAQVGLAERAGEWPARLSGGQRQRVALARALVHRPRLLLLDEPLGALDALTRIDMQNLIEGLWQRLGFTAVLVTHDVAEAVALADRVVLIEDGRIALDARIDLPRPRHRGAPAFARLEEAILNRVMQRKADPDEVTDARAHVARPSPWEVSAAAVGWAV</sequence>
<organism>
    <name type="scientific">Ralstonia nicotianae (strain ATCC BAA-1114 / GMI1000)</name>
    <name type="common">Ralstonia solanacearum</name>
    <dbReference type="NCBI Taxonomy" id="267608"/>
    <lineage>
        <taxon>Bacteria</taxon>
        <taxon>Pseudomonadati</taxon>
        <taxon>Pseudomonadota</taxon>
        <taxon>Betaproteobacteria</taxon>
        <taxon>Burkholderiales</taxon>
        <taxon>Burkholderiaceae</taxon>
        <taxon>Ralstonia</taxon>
        <taxon>Ralstonia solanacearum species complex</taxon>
    </lineage>
</organism>